<proteinExistence type="inferred from homology"/>
<name>ADCA_STRP3</name>
<feature type="signal peptide" evidence="2">
    <location>
        <begin position="1"/>
        <end position="28"/>
    </location>
</feature>
<feature type="chain" id="PRO_0000031869" description="Zinc-binding protein AdcA">
    <location>
        <begin position="29"/>
        <end position="515"/>
    </location>
</feature>
<feature type="region of interest" description="Disordered" evidence="3">
    <location>
        <begin position="126"/>
        <end position="148"/>
    </location>
</feature>
<feature type="region of interest" description="His-rich loop" evidence="1">
    <location>
        <begin position="129"/>
        <end position="148"/>
    </location>
</feature>
<feature type="binding site" evidence="1">
    <location>
        <position position="66"/>
    </location>
    <ligand>
        <name>Zn(2+)</name>
        <dbReference type="ChEBI" id="CHEBI:29105"/>
    </ligand>
</feature>
<feature type="binding site" evidence="1">
    <location>
        <position position="152"/>
    </location>
    <ligand>
        <name>Zn(2+)</name>
        <dbReference type="ChEBI" id="CHEBI:29105"/>
    </ligand>
</feature>
<feature type="binding site" evidence="1">
    <location>
        <position position="216"/>
    </location>
    <ligand>
        <name>Zn(2+)</name>
        <dbReference type="ChEBI" id="CHEBI:29105"/>
    </ligand>
</feature>
<feature type="binding site" evidence="1">
    <location>
        <position position="291"/>
    </location>
    <ligand>
        <name>Zn(2+)</name>
        <dbReference type="ChEBI" id="CHEBI:29105"/>
    </ligand>
</feature>
<reference key="1">
    <citation type="journal article" date="2002" name="Proc. Natl. Acad. Sci. U.S.A.">
        <title>Genome sequence of a serotype M3 strain of group A Streptococcus: phage-encoded toxins, the high-virulence phenotype, and clone emergence.</title>
        <authorList>
            <person name="Beres S.B."/>
            <person name="Sylva G.L."/>
            <person name="Barbian K.D."/>
            <person name="Lei B."/>
            <person name="Hoff J.S."/>
            <person name="Mammarella N.D."/>
            <person name="Liu M.-Y."/>
            <person name="Smoot J.C."/>
            <person name="Porcella S.F."/>
            <person name="Parkins L.D."/>
            <person name="Campbell D.S."/>
            <person name="Smith T.M."/>
            <person name="McCormick J.K."/>
            <person name="Leung D.Y.M."/>
            <person name="Schlievert P.M."/>
            <person name="Musser J.M."/>
        </authorList>
    </citation>
    <scope>NUCLEOTIDE SEQUENCE [LARGE SCALE GENOMIC DNA]</scope>
    <source>
        <strain>ATCC BAA-595 / MGAS315</strain>
    </source>
</reference>
<keyword id="KW-0406">Ion transport</keyword>
<keyword id="KW-0479">Metal-binding</keyword>
<keyword id="KW-0732">Signal</keyword>
<keyword id="KW-0813">Transport</keyword>
<keyword id="KW-0862">Zinc</keyword>
<keyword id="KW-0864">Zinc transport</keyword>
<comment type="function">
    <text evidence="1">Part of the ATP-binding cassette (ABC) transport system AdcABC involved in zinc import (By similarity). Binds zinc with high affinity and specificity and delivers it to the membrane permease for translocation into the cytoplasm (By similarity).</text>
</comment>
<comment type="domain">
    <text evidence="1">The His-rich loop facilitates the closure of the zinc binding site and is required for zinc acquisition.</text>
</comment>
<comment type="similarity">
    <text evidence="4">Belongs to the bacterial solute-binding protein 9 family.</text>
</comment>
<accession>P0DF58</accession>
<accession>Q8K847</accession>
<evidence type="ECO:0000250" key="1">
    <source>
        <dbReference type="UniProtKB" id="Q8CWN2"/>
    </source>
</evidence>
<evidence type="ECO:0000255" key="2"/>
<evidence type="ECO:0000256" key="3">
    <source>
        <dbReference type="SAM" id="MobiDB-lite"/>
    </source>
</evidence>
<evidence type="ECO:0000305" key="4"/>
<sequence length="515" mass="58580">MKKKILLMMSLISVFFAWQLTQAKQVLAEGKVKVVTTFYPVYEFTKGIVGNDGDVSMLMKAGTEPHDFEPSTKDIKKIQDADAFVYMDDNMETWVSDVKKSLTSKKVTIVKGTGNMLLVAGVGHDHHHEEADKKHEHNKHSEEGHNHAFDPHVWLSPYRSITVVENIRDSLSKAYPEKAENFKANAATYIEKLKELDKDYTAALSDAKQKSFVTQHAAFGYMALDYGLNQISINGVIPDAEPSAKRIATLSKYVKKYGIKYIYFEENASSKVAKTLAKEAGVKAAVLSPLEGLTEKEMKAGQDYFTVMRKNLETLRLTTDVAGKEILPEKDTTKTVYNGYFKDKEVKDRQLSDWSGSWQSVYPYLQDGTLDQVWDYKAKKSKGKMTAAEYKDYYTTGYKTDVEQIKINGKKKTMTFVRNGEKKTFTYTYAGKEILTYPKGNRGVRFMFEAKEPNAGEFKYVQFSDHAIAPEKAEHFHLYWGGDSQEKLHKELEHWPTYYGSDLSGREIAQEINAH</sequence>
<gene>
    <name type="primary">adcA</name>
    <name type="ordered locus">SpyM3_0466</name>
</gene>
<organism>
    <name type="scientific">Streptococcus pyogenes serotype M3 (strain ATCC BAA-595 / MGAS315)</name>
    <dbReference type="NCBI Taxonomy" id="198466"/>
    <lineage>
        <taxon>Bacteria</taxon>
        <taxon>Bacillati</taxon>
        <taxon>Bacillota</taxon>
        <taxon>Bacilli</taxon>
        <taxon>Lactobacillales</taxon>
        <taxon>Streptococcaceae</taxon>
        <taxon>Streptococcus</taxon>
    </lineage>
</organism>
<protein>
    <recommendedName>
        <fullName>Zinc-binding protein AdcA</fullName>
    </recommendedName>
</protein>
<dbReference type="EMBL" id="AE014074">
    <property type="protein sequence ID" value="AAM79073.1"/>
    <property type="molecule type" value="Genomic_DNA"/>
</dbReference>
<dbReference type="RefSeq" id="WP_011054319.1">
    <property type="nucleotide sequence ID" value="NC_004070.1"/>
</dbReference>
<dbReference type="SMR" id="P0DF58"/>
<dbReference type="KEGG" id="spg:SpyM3_0466"/>
<dbReference type="HOGENOM" id="CLU_016838_7_1_9"/>
<dbReference type="Proteomes" id="UP000000564">
    <property type="component" value="Chromosome"/>
</dbReference>
<dbReference type="GO" id="GO:0008270">
    <property type="term" value="F:zinc ion binding"/>
    <property type="evidence" value="ECO:0007669"/>
    <property type="project" value="InterPro"/>
</dbReference>
<dbReference type="GO" id="GO:0007155">
    <property type="term" value="P:cell adhesion"/>
    <property type="evidence" value="ECO:0007669"/>
    <property type="project" value="InterPro"/>
</dbReference>
<dbReference type="GO" id="GO:0006829">
    <property type="term" value="P:zinc ion transport"/>
    <property type="evidence" value="ECO:0007669"/>
    <property type="project" value="UniProtKB-KW"/>
</dbReference>
<dbReference type="CDD" id="cd01017">
    <property type="entry name" value="AdcA"/>
    <property type="match status" value="1"/>
</dbReference>
<dbReference type="Gene3D" id="2.40.128.20">
    <property type="match status" value="1"/>
</dbReference>
<dbReference type="Gene3D" id="3.40.50.1980">
    <property type="entry name" value="Nitrogenase molybdenum iron protein domain"/>
    <property type="match status" value="2"/>
</dbReference>
<dbReference type="InterPro" id="IPR006129">
    <property type="entry name" value="AdhesinB"/>
</dbReference>
<dbReference type="InterPro" id="IPR050492">
    <property type="entry name" value="Bact_metal-bind_prot9"/>
</dbReference>
<dbReference type="InterPro" id="IPR012674">
    <property type="entry name" value="Calycin"/>
</dbReference>
<dbReference type="InterPro" id="IPR006128">
    <property type="entry name" value="Lipoprotein_PsaA-like"/>
</dbReference>
<dbReference type="InterPro" id="IPR015304">
    <property type="entry name" value="ZinT_dom"/>
</dbReference>
<dbReference type="InterPro" id="IPR006127">
    <property type="entry name" value="ZnuA-like"/>
</dbReference>
<dbReference type="PANTHER" id="PTHR42953:SF3">
    <property type="entry name" value="HIGH-AFFINITY ZINC UPTAKE SYSTEM PROTEIN ZNUA"/>
    <property type="match status" value="1"/>
</dbReference>
<dbReference type="PANTHER" id="PTHR42953">
    <property type="entry name" value="HIGH-AFFINITY ZINC UPTAKE SYSTEM PROTEIN ZNUA-RELATED"/>
    <property type="match status" value="1"/>
</dbReference>
<dbReference type="Pfam" id="PF09223">
    <property type="entry name" value="ZinT"/>
    <property type="match status" value="1"/>
</dbReference>
<dbReference type="Pfam" id="PF01297">
    <property type="entry name" value="ZnuA"/>
    <property type="match status" value="1"/>
</dbReference>
<dbReference type="PRINTS" id="PR00691">
    <property type="entry name" value="ADHESINB"/>
</dbReference>
<dbReference type="PRINTS" id="PR00690">
    <property type="entry name" value="ADHESNFAMILY"/>
</dbReference>
<dbReference type="SUPFAM" id="SSF53807">
    <property type="entry name" value="Helical backbone' metal receptor"/>
    <property type="match status" value="1"/>
</dbReference>
<dbReference type="SUPFAM" id="SSF50814">
    <property type="entry name" value="Lipocalins"/>
    <property type="match status" value="1"/>
</dbReference>